<name>MR30_CONMR</name>
<evidence type="ECO:0000269" key="1">
    <source>
    </source>
</evidence>
<evidence type="ECO:0000269" key="2">
    <source>
    </source>
</evidence>
<evidence type="ECO:0000305" key="3"/>
<accession>A1BQQ5</accession>
<accession>A1BQQ6</accession>
<accession>A1BQQ7</accession>
<accession>A4ZXA1</accession>
<sequence length="289" mass="32251">MLSTMQTVGAILMLSIVFVAGTKRHACDSKYSEVTPTHTMCLTDNANAVAVTLTQEVKVQIVRMHNVIRATVNDAANMMKMEWDDRLAAVAQKWAMQCILGHDGFANHAEPDLPGYVGQNVGWSNYHMTFPDVVDLWAAEIEDYEYGVWNDNTGHYIQQIYAEASRIGCGQSACGEDRYFVCNYYKSTMGNTPYAQGSRCGQCPNSCWEELCDCTSGPDACCNGGSLNIDTCECQCPRLWSGADCQEKQCPDHDYEDMCDYPDVVNNPEYWCQFSNIRSDCPIRCGDCP</sequence>
<reference key="1">
    <citation type="journal article" date="2006" name="Biochemistry">
        <title>A single gamma-carboxyglutamic acid residue in a novel cysteine-rich secretory protein without propeptide.</title>
        <authorList>
            <person name="Hansson K."/>
            <person name="Thamlitz A.-M."/>
            <person name="Furie B."/>
            <person name="Furie B.C."/>
            <person name="Stenflo J."/>
        </authorList>
    </citation>
    <scope>NUCLEOTIDE SEQUENCE [MRNA]</scope>
    <scope>PROTEIN SEQUENCE OF 25-39; 64-69; 81-93; 179-186; 239-248 AND 279-284</scope>
    <scope>GAMMA-CARBOXYGLUTAMATION AT GLU-33</scope>
    <scope>FUNCTION (VARIANTS FORM 1/2/3)</scope>
    <source>
        <tissue>Venom</tissue>
        <tissue>Venom duct</tissue>
    </source>
</reference>
<reference key="2">
    <citation type="journal article" date="2008" name="Acta Biochim. Biophys. Sin.">
        <title>Cloning and isolation of a conus cysteine-rich protein homologous to Tex31 but without proteolytic activity.</title>
        <authorList>
            <person name="Qian J."/>
            <person name="Guo Z.Y."/>
            <person name="Chi C.W."/>
        </authorList>
    </citation>
    <scope>NUCLEOTIDE SEQUENCE [MRNA]</scope>
    <scope>PROTEIN SEQUENCE OF 25-39</scope>
    <scope>FUNCTION</scope>
    <scope>MASS SPECTROMETRY (VARIANTS MR30-1 AND MR30-2)</scope>
    <source>
        <tissue>Venom</tissue>
        <tissue>Venom duct</tissue>
    </source>
</reference>
<proteinExistence type="evidence at protein level"/>
<protein>
    <recommendedName>
        <fullName>Cysteine-rich venom protein Mr30</fullName>
        <shortName>CRVP</shortName>
    </recommendedName>
    <alternativeName>
        <fullName>Cysteine-rich secretory protein Mr30</fullName>
    </alternativeName>
    <alternativeName>
        <fullName>GlaCrisp form 1/2/3</fullName>
    </alternativeName>
    <alternativeName>
        <fullName>Mr30-1/2</fullName>
    </alternativeName>
</protein>
<dbReference type="EMBL" id="EF493183">
    <property type="protein sequence ID" value="ABP48101.1"/>
    <property type="molecule type" value="mRNA"/>
</dbReference>
<dbReference type="EMBL" id="EF493184">
    <property type="protein sequence ID" value="ABP48102.1"/>
    <property type="molecule type" value="mRNA"/>
</dbReference>
<dbReference type="EMBL" id="DQ647193">
    <property type="protein sequence ID" value="ABG36843.1"/>
    <property type="molecule type" value="mRNA"/>
</dbReference>
<dbReference type="EMBL" id="DQ647194">
    <property type="protein sequence ID" value="ABG36844.1"/>
    <property type="molecule type" value="mRNA"/>
</dbReference>
<dbReference type="EMBL" id="DQ647195">
    <property type="protein sequence ID" value="ABG36845.1"/>
    <property type="molecule type" value="mRNA"/>
</dbReference>
<dbReference type="SMR" id="A1BQQ5"/>
<dbReference type="GO" id="GO:0005576">
    <property type="term" value="C:extracellular region"/>
    <property type="evidence" value="ECO:0007669"/>
    <property type="project" value="UniProtKB-SubCell"/>
</dbReference>
<dbReference type="Gene3D" id="3.40.33.10">
    <property type="entry name" value="CAP"/>
    <property type="match status" value="1"/>
</dbReference>
<dbReference type="InterPro" id="IPR014044">
    <property type="entry name" value="CAP_dom"/>
</dbReference>
<dbReference type="InterPro" id="IPR035940">
    <property type="entry name" value="CAP_sf"/>
</dbReference>
<dbReference type="InterPro" id="IPR001283">
    <property type="entry name" value="CRISP-related"/>
</dbReference>
<dbReference type="PANTHER" id="PTHR10334">
    <property type="entry name" value="CYSTEINE-RICH SECRETORY PROTEIN-RELATED"/>
    <property type="match status" value="1"/>
</dbReference>
<dbReference type="Pfam" id="PF00188">
    <property type="entry name" value="CAP"/>
    <property type="match status" value="1"/>
</dbReference>
<dbReference type="PRINTS" id="PR00837">
    <property type="entry name" value="V5TPXLIKE"/>
</dbReference>
<dbReference type="SMART" id="SM00198">
    <property type="entry name" value="SCP"/>
    <property type="match status" value="1"/>
</dbReference>
<dbReference type="SUPFAM" id="SSF55797">
    <property type="entry name" value="PR-1-like"/>
    <property type="match status" value="1"/>
</dbReference>
<feature type="signal peptide" evidence="1 2">
    <location>
        <begin position="1"/>
        <end position="24"/>
    </location>
</feature>
<feature type="chain" id="PRO_0000326274" description="Cysteine-rich venom protein Mr30">
    <location>
        <begin position="25"/>
        <end position="289"/>
    </location>
</feature>
<feature type="domain" description="SCP">
    <location>
        <begin position="62"/>
        <end position="184"/>
    </location>
</feature>
<feature type="modified residue" description="4-carboxyglutamate" evidence="1">
    <location>
        <position position="33"/>
    </location>
</feature>
<feature type="sequence variant" description="In form 1, form 2 and Mr30-1.">
    <original>V</original>
    <variation>A</variation>
    <location>
        <position position="19"/>
    </location>
</feature>
<feature type="sequence variant" description="In form 1, form 2 and Mr30-1.">
    <original>E</original>
    <variation>D</variation>
    <location>
        <position position="33"/>
    </location>
</feature>
<feature type="sequence variant" description="In form 1.">
    <original>V</original>
    <variation>M</variation>
    <location>
        <position position="49"/>
    </location>
</feature>
<feature type="sequence variant" description="In Mr30-1.">
    <original>K</original>
    <variation>E</variation>
    <location>
        <position position="186"/>
    </location>
</feature>
<comment type="function">
    <text evidence="1 2">Has no proteolytic activity.</text>
</comment>
<comment type="subcellular location">
    <subcellularLocation>
        <location>Secreted</location>
    </subcellularLocation>
</comment>
<comment type="tissue specificity">
    <text>Expressed by the venom duct.</text>
</comment>
<comment type="PTM">
    <text>Contains 11 disulfide bonds.</text>
</comment>
<comment type="mass spectrometry" mass="29665.0" method="Unknown" evidence="2">
    <text>in variant Mr30-2.</text>
</comment>
<comment type="mass spectrometry" mass="29666.0" method="Unknown" evidence="2">
    <text>in variant Mr30-1.</text>
</comment>
<comment type="similarity">
    <text evidence="3">Belongs to the CRISP family.</text>
</comment>
<keyword id="KW-0165">Cleavage on pair of basic residues</keyword>
<keyword id="KW-0903">Direct protein sequencing</keyword>
<keyword id="KW-1015">Disulfide bond</keyword>
<keyword id="KW-0301">Gamma-carboxyglutamic acid</keyword>
<keyword id="KW-0964">Secreted</keyword>
<keyword id="KW-0732">Signal</keyword>
<organism>
    <name type="scientific">Conus marmoreus</name>
    <name type="common">Marble cone</name>
    <dbReference type="NCBI Taxonomy" id="42752"/>
    <lineage>
        <taxon>Eukaryota</taxon>
        <taxon>Metazoa</taxon>
        <taxon>Spiralia</taxon>
        <taxon>Lophotrochozoa</taxon>
        <taxon>Mollusca</taxon>
        <taxon>Gastropoda</taxon>
        <taxon>Caenogastropoda</taxon>
        <taxon>Neogastropoda</taxon>
        <taxon>Conoidea</taxon>
        <taxon>Conidae</taxon>
        <taxon>Conus</taxon>
    </lineage>
</organism>